<gene>
    <name type="primary">PTGDS</name>
</gene>
<comment type="function">
    <text evidence="1 2 3">Catalyzes the conversion of PGH2 to PGD2, a prostaglandin involved in smooth muscle contraction/relaxation and a potent inhibitor of platelet aggregation. Involved in a variety of CNS functions, such as sedation, NREM sleep and PGE2-induced allodynia, and may have an anti-apoptotic role in oligodendrocytes. Binds small non-substrate lipophilic molecules, including biliverdin, bilirubin, retinal, retinoic acid and thyroid hormone, and may act as a scavenger for harmful hydrophobic molecules and as a secretory retinoid and thyroid hormone transporter. Possibly involved in development and maintenance of the blood-brain, blood-retina, blood-aqueous humor and blood-testis barrier. It is likely to play important roles in both maturation and maintenance of the central nervous system and male reproductive system (By similarity). Involved in PLA2G3-dependent maturation of mast cells. PLA2G3 is secreted by immature mast cells and acts on nearby fibroblasts upstream to PTDGS to synthesize PGD2, which in turn promotes mast cell maturation and degranulation via PTGDR (By similarity).</text>
</comment>
<comment type="catalytic activity">
    <reaction evidence="3">
        <text>prostaglandin H2 = prostaglandin D2</text>
        <dbReference type="Rhea" id="RHEA:10600"/>
        <dbReference type="ChEBI" id="CHEBI:57405"/>
        <dbReference type="ChEBI" id="CHEBI:57406"/>
        <dbReference type="EC" id="5.3.99.2"/>
    </reaction>
</comment>
<comment type="subunit">
    <text evidence="3">Monomer.</text>
</comment>
<comment type="subcellular location">
    <subcellularLocation>
        <location evidence="3">Rough endoplasmic reticulum</location>
    </subcellularLocation>
    <subcellularLocation>
        <location evidence="3">Nucleus membrane</location>
    </subcellularLocation>
    <subcellularLocation>
        <location evidence="3">Golgi apparatus</location>
    </subcellularLocation>
    <subcellularLocation>
        <location evidence="3">Cytoplasm</location>
        <location evidence="3">Perinuclear region</location>
    </subcellularLocation>
    <subcellularLocation>
        <location evidence="3">Secreted</location>
    </subcellularLocation>
    <text evidence="3">Detected on rough endoplasmic reticulum of arachnoid and menigioma cells. Localized to the nuclear envelope, Golgi apparatus, secretory vesicles and spherical cytoplasmic structures in arachnoid trabecular cells, and to circular cytoplasmic structures in meningeal macrophages and perivascular microglial cells. In oligodendrocytes, localized to the rough endoplasmic reticulum and nuclear envelope. In retinal pigment epithelial cells, localized to distinct cytoplasmic domains including the perinuclear region. Also secreted.</text>
</comment>
<comment type="domain">
    <text evidence="3">Forms a beta-barrel structure that accommodates hydrophobic ligands in its interior.</text>
</comment>
<comment type="similarity">
    <text evidence="5">Belongs to the calycin superfamily. Lipocalin family.</text>
</comment>
<reference key="1">
    <citation type="journal article" date="2001" name="J. Hered.">
        <title>Human and ape molecular clocks and constraints on paleontological hypotheses.</title>
        <authorList>
            <person name="Stauffer R.L."/>
            <person name="Walker A."/>
            <person name="Ryder O.A."/>
            <person name="Lyons-Weiler M."/>
            <person name="Hedges S.B."/>
        </authorList>
    </citation>
    <scope>NUCLEOTIDE SEQUENCE [MRNA]</scope>
</reference>
<dbReference type="EC" id="5.3.99.2" evidence="3"/>
<dbReference type="EMBL" id="AF354637">
    <property type="protein sequence ID" value="AAL56241.1"/>
    <property type="molecule type" value="mRNA"/>
</dbReference>
<dbReference type="RefSeq" id="NP_001266620.1">
    <property type="nucleotide sequence ID" value="NM_001279691.1"/>
</dbReference>
<dbReference type="SMR" id="Q8WNM1"/>
<dbReference type="FunCoup" id="Q8WNM1">
    <property type="interactions" value="184"/>
</dbReference>
<dbReference type="STRING" id="9593.ENSGGOP00000004279"/>
<dbReference type="GlyCosmos" id="Q8WNM1">
    <property type="glycosylation" value="2 sites, No reported glycans"/>
</dbReference>
<dbReference type="GeneID" id="101130674"/>
<dbReference type="CTD" id="5730"/>
<dbReference type="InParanoid" id="Q8WNM1"/>
<dbReference type="Proteomes" id="UP000001519">
    <property type="component" value="Unplaced"/>
</dbReference>
<dbReference type="GO" id="GO:0005576">
    <property type="term" value="C:extracellular region"/>
    <property type="evidence" value="ECO:0000250"/>
    <property type="project" value="UniProtKB"/>
</dbReference>
<dbReference type="GO" id="GO:0005615">
    <property type="term" value="C:extracellular space"/>
    <property type="evidence" value="ECO:0000250"/>
    <property type="project" value="UniProtKB"/>
</dbReference>
<dbReference type="GO" id="GO:0005794">
    <property type="term" value="C:Golgi apparatus"/>
    <property type="evidence" value="ECO:0007669"/>
    <property type="project" value="UniProtKB-SubCell"/>
</dbReference>
<dbReference type="GO" id="GO:0031965">
    <property type="term" value="C:nuclear membrane"/>
    <property type="evidence" value="ECO:0007669"/>
    <property type="project" value="UniProtKB-SubCell"/>
</dbReference>
<dbReference type="GO" id="GO:0048471">
    <property type="term" value="C:perinuclear region of cytoplasm"/>
    <property type="evidence" value="ECO:0007669"/>
    <property type="project" value="UniProtKB-SubCell"/>
</dbReference>
<dbReference type="GO" id="GO:0005791">
    <property type="term" value="C:rough endoplasmic reticulum"/>
    <property type="evidence" value="ECO:0000250"/>
    <property type="project" value="UniProtKB"/>
</dbReference>
<dbReference type="GO" id="GO:0004667">
    <property type="term" value="F:prostaglandin-D synthase activity"/>
    <property type="evidence" value="ECO:0000250"/>
    <property type="project" value="UniProtKB"/>
</dbReference>
<dbReference type="GO" id="GO:0005501">
    <property type="term" value="F:retinoid binding"/>
    <property type="evidence" value="ECO:0000250"/>
    <property type="project" value="UniProtKB"/>
</dbReference>
<dbReference type="GO" id="GO:0036094">
    <property type="term" value="F:small molecule binding"/>
    <property type="evidence" value="ECO:0007669"/>
    <property type="project" value="InterPro"/>
</dbReference>
<dbReference type="GO" id="GO:0043303">
    <property type="term" value="P:mast cell degranulation"/>
    <property type="evidence" value="ECO:0007669"/>
    <property type="project" value="UniProtKB-KW"/>
</dbReference>
<dbReference type="GO" id="GO:0001516">
    <property type="term" value="P:prostaglandin biosynthetic process"/>
    <property type="evidence" value="ECO:0000250"/>
    <property type="project" value="UniProtKB"/>
</dbReference>
<dbReference type="CDD" id="cd19419">
    <property type="entry name" value="lipocalin_L-PGDS"/>
    <property type="match status" value="1"/>
</dbReference>
<dbReference type="FunFam" id="2.40.128.20:FF:000010">
    <property type="entry name" value="Prostaglandin-H2 D-isomerase"/>
    <property type="match status" value="1"/>
</dbReference>
<dbReference type="Gene3D" id="2.40.128.20">
    <property type="match status" value="1"/>
</dbReference>
<dbReference type="InterPro" id="IPR012674">
    <property type="entry name" value="Calycin"/>
</dbReference>
<dbReference type="InterPro" id="IPR002345">
    <property type="entry name" value="Lipocalin"/>
</dbReference>
<dbReference type="InterPro" id="IPR022272">
    <property type="entry name" value="Lipocalin_CS"/>
</dbReference>
<dbReference type="InterPro" id="IPR000566">
    <property type="entry name" value="Lipocln_cytosolic_FA-bd_dom"/>
</dbReference>
<dbReference type="PANTHER" id="PTHR11430">
    <property type="entry name" value="LIPOCALIN"/>
    <property type="match status" value="1"/>
</dbReference>
<dbReference type="PANTHER" id="PTHR11430:SF86">
    <property type="entry name" value="PROSTAGLANDIN-H2 D-ISOMERASE"/>
    <property type="match status" value="1"/>
</dbReference>
<dbReference type="Pfam" id="PF00061">
    <property type="entry name" value="Lipocalin"/>
    <property type="match status" value="1"/>
</dbReference>
<dbReference type="PRINTS" id="PR00179">
    <property type="entry name" value="LIPOCALIN"/>
</dbReference>
<dbReference type="PRINTS" id="PR01254">
    <property type="entry name" value="PGNDSYNTHASE"/>
</dbReference>
<dbReference type="SUPFAM" id="SSF50814">
    <property type="entry name" value="Lipocalins"/>
    <property type="match status" value="1"/>
</dbReference>
<dbReference type="PROSITE" id="PS00213">
    <property type="entry name" value="LIPOCALIN"/>
    <property type="match status" value="1"/>
</dbReference>
<feature type="signal peptide" evidence="3">
    <location>
        <begin position="1"/>
        <end position="22"/>
    </location>
</feature>
<feature type="chain" id="PRO_0000017943" description="Prostaglandin-H2 D-isomerase">
    <location>
        <begin position="23"/>
        <end position="190"/>
    </location>
</feature>
<feature type="active site" description="Nucleophile" evidence="3">
    <location>
        <position position="65"/>
    </location>
</feature>
<feature type="glycosylation site" description="N-linked (GlcNAc...) asparagine" evidence="4">
    <location>
        <position position="51"/>
    </location>
</feature>
<feature type="glycosylation site" description="N-linked (GlcNAc...) asparagine" evidence="4">
    <location>
        <position position="78"/>
    </location>
</feature>
<feature type="disulfide bond" evidence="2">
    <location>
        <begin position="89"/>
        <end position="186"/>
    </location>
</feature>
<accession>Q8WNM1</accession>
<organism>
    <name type="scientific">Gorilla gorilla gorilla</name>
    <name type="common">Western lowland gorilla</name>
    <dbReference type="NCBI Taxonomy" id="9595"/>
    <lineage>
        <taxon>Eukaryota</taxon>
        <taxon>Metazoa</taxon>
        <taxon>Chordata</taxon>
        <taxon>Craniata</taxon>
        <taxon>Vertebrata</taxon>
        <taxon>Euteleostomi</taxon>
        <taxon>Mammalia</taxon>
        <taxon>Eutheria</taxon>
        <taxon>Euarchontoglires</taxon>
        <taxon>Primates</taxon>
        <taxon>Haplorrhini</taxon>
        <taxon>Catarrhini</taxon>
        <taxon>Hominidae</taxon>
        <taxon>Gorilla</taxon>
    </lineage>
</organism>
<evidence type="ECO:0000250" key="1"/>
<evidence type="ECO:0000250" key="2">
    <source>
        <dbReference type="UniProtKB" id="O09114"/>
    </source>
</evidence>
<evidence type="ECO:0000250" key="3">
    <source>
        <dbReference type="UniProtKB" id="P41222"/>
    </source>
</evidence>
<evidence type="ECO:0000255" key="4"/>
<evidence type="ECO:0000305" key="5"/>
<sequence length="190" mass="20985">MATHHTLWMGLALLGVLGDLQAAPEAQVSVQPNFQQDKFLGRWFSAGLASNSSWLREKKAALSMCKSVVAPAADGGLNLTSTFLRKNQCETRTMLLQTAGSLGSYSYRSPHWGSTYSVSVVETDYDQYALLYSQGSKGPGEDFRMATLYSRTQTPRAELKEKFTAFCKAQGFTEDTIVFLPQTDKCLTEQ</sequence>
<proteinExistence type="evidence at transcript level"/>
<keyword id="KW-0963">Cytoplasm</keyword>
<keyword id="KW-1015">Disulfide bond</keyword>
<keyword id="KW-0256">Endoplasmic reticulum</keyword>
<keyword id="KW-0275">Fatty acid biosynthesis</keyword>
<keyword id="KW-0276">Fatty acid metabolism</keyword>
<keyword id="KW-0325">Glycoprotein</keyword>
<keyword id="KW-0333">Golgi apparatus</keyword>
<keyword id="KW-0413">Isomerase</keyword>
<keyword id="KW-0444">Lipid biosynthesis</keyword>
<keyword id="KW-0443">Lipid metabolism</keyword>
<keyword id="KW-0467">Mast cell degranulation</keyword>
<keyword id="KW-0472">Membrane</keyword>
<keyword id="KW-0539">Nucleus</keyword>
<keyword id="KW-0643">Prostaglandin biosynthesis</keyword>
<keyword id="KW-0644">Prostaglandin metabolism</keyword>
<keyword id="KW-1185">Reference proteome</keyword>
<keyword id="KW-0964">Secreted</keyword>
<keyword id="KW-0732">Signal</keyword>
<keyword id="KW-0813">Transport</keyword>
<protein>
    <recommendedName>
        <fullName>Prostaglandin-H2 D-isomerase</fullName>
        <ecNumber evidence="3">5.3.99.2</ecNumber>
    </recommendedName>
    <alternativeName>
        <fullName>Glutathione-independent PGD synthase</fullName>
    </alternativeName>
    <alternativeName>
        <fullName>Lipocalin-type prostaglandin-D synthase</fullName>
    </alternativeName>
    <alternativeName>
        <fullName>Prostaglandin-D2 synthase</fullName>
        <shortName>PGD2 synthase</shortName>
        <shortName>PGDS</shortName>
        <shortName>PGDS2</shortName>
    </alternativeName>
</protein>
<name>PTGDS_GORGO</name>